<gene>
    <name type="primary">CYP707A6</name>
    <name type="synonym">ABA8OX2</name>
    <name type="ORF">OsI_028552</name>
</gene>
<accession>Q09J78</accession>
<accession>A2YW59</accession>
<sequence>MAFLLFFVFVTAAVLCFVVPAFLLLCTSVQRRRDVGQGGGRDWQKKKKLRLPPGSMGWPYVGETLQLYSQDPNVFFASKQKRYGEIFKTNLLGCPCVMLASPEAARFVLVSQARLFKPTYPPSKERMIGPSALFFHQGEYHLRLRRLVQAALAPDSLRALVPDVDAAVAATLAAWSGGHVASTFHAMKKLSFDVGVVTIFGGRLGRRHREELRTNYSVVERGYNCFPNRFPGTLYHKAIQARKRLRAILSEIVAERRARGGGGDDLLGGLMRSRDDGTAGAVALLTDDQIADNVVGVLFAAQDTTASVLTWILKYLHDSPKLLEAVKAEQMAIYVANEGGKRPLTWTQTRSMTLTHQVILESLRMASIISFTFREAVADVEYKGFLIPKGWKVMPLFRNIHHNPDYFQDPQKFDPSRFKVAPRPSTFLPFGSGVHACPGNELAKLEMLVLVHRLVTAYRWEIVGASDEVEYSPFPVPRGGLNAKLWKQEAEEDMYMAMGTITAAGA</sequence>
<proteinExistence type="evidence at transcript level"/>
<feature type="chain" id="PRO_0000288645" description="Abscisic acid 8'-hydroxylase 2">
    <location>
        <begin position="1"/>
        <end position="506"/>
    </location>
</feature>
<feature type="transmembrane region" description="Helical" evidence="3">
    <location>
        <begin position="3"/>
        <end position="23"/>
    </location>
</feature>
<feature type="binding site" description="axial binding residue" evidence="1">
    <location>
        <position position="437"/>
    </location>
    <ligand>
        <name>heme</name>
        <dbReference type="ChEBI" id="CHEBI:30413"/>
    </ligand>
    <ligandPart>
        <name>Fe</name>
        <dbReference type="ChEBI" id="CHEBI:18248"/>
    </ligandPart>
</feature>
<evidence type="ECO:0000250" key="1"/>
<evidence type="ECO:0000250" key="2">
    <source>
        <dbReference type="UniProtKB" id="Q949P1"/>
    </source>
</evidence>
<evidence type="ECO:0000255" key="3"/>
<evidence type="ECO:0000269" key="4">
    <source>
    </source>
</evidence>
<evidence type="ECO:0000305" key="5"/>
<keyword id="KW-0349">Heme</keyword>
<keyword id="KW-0408">Iron</keyword>
<keyword id="KW-0472">Membrane</keyword>
<keyword id="KW-0479">Metal-binding</keyword>
<keyword id="KW-0503">Monooxygenase</keyword>
<keyword id="KW-0560">Oxidoreductase</keyword>
<keyword id="KW-1185">Reference proteome</keyword>
<keyword id="KW-0812">Transmembrane</keyword>
<keyword id="KW-1133">Transmembrane helix</keyword>
<dbReference type="EC" id="1.14.14.137" evidence="2"/>
<dbReference type="EMBL" id="DQ887715">
    <property type="protein sequence ID" value="ABI64255.1"/>
    <property type="molecule type" value="mRNA"/>
</dbReference>
<dbReference type="EMBL" id="CM000133">
    <property type="status" value="NOT_ANNOTATED_CDS"/>
    <property type="molecule type" value="Genomic_DNA"/>
</dbReference>
<dbReference type="SMR" id="Q09J78"/>
<dbReference type="STRING" id="39946.Q09J78"/>
<dbReference type="EnsemblPlants" id="BGIOSGA026823-TA">
    <property type="protein sequence ID" value="BGIOSGA026823-PA"/>
    <property type="gene ID" value="BGIOSGA026823"/>
</dbReference>
<dbReference type="Gramene" id="BGIOSGA026823-TA">
    <property type="protein sequence ID" value="BGIOSGA026823-PA"/>
    <property type="gene ID" value="BGIOSGA026823"/>
</dbReference>
<dbReference type="HOGENOM" id="CLU_001570_15_5_1"/>
<dbReference type="OMA" id="AHMCLGL"/>
<dbReference type="UniPathway" id="UPA00093"/>
<dbReference type="Proteomes" id="UP000007015">
    <property type="component" value="Chromosome 8"/>
</dbReference>
<dbReference type="ExpressionAtlas" id="Q09J78">
    <property type="expression patterns" value="differential"/>
</dbReference>
<dbReference type="GO" id="GO:0016020">
    <property type="term" value="C:membrane"/>
    <property type="evidence" value="ECO:0007669"/>
    <property type="project" value="UniProtKB-SubCell"/>
</dbReference>
<dbReference type="GO" id="GO:0010295">
    <property type="term" value="F:(+)-abscisic acid 8'-hydroxylase activity"/>
    <property type="evidence" value="ECO:0007669"/>
    <property type="project" value="UniProtKB-EC"/>
</dbReference>
<dbReference type="GO" id="GO:0020037">
    <property type="term" value="F:heme binding"/>
    <property type="evidence" value="ECO:0007669"/>
    <property type="project" value="InterPro"/>
</dbReference>
<dbReference type="GO" id="GO:0005506">
    <property type="term" value="F:iron ion binding"/>
    <property type="evidence" value="ECO:0007669"/>
    <property type="project" value="InterPro"/>
</dbReference>
<dbReference type="GO" id="GO:0046345">
    <property type="term" value="P:abscisic acid catabolic process"/>
    <property type="evidence" value="ECO:0007669"/>
    <property type="project" value="UniProtKB-UniPathway"/>
</dbReference>
<dbReference type="GO" id="GO:0016125">
    <property type="term" value="P:sterol metabolic process"/>
    <property type="evidence" value="ECO:0007669"/>
    <property type="project" value="TreeGrafter"/>
</dbReference>
<dbReference type="CDD" id="cd11043">
    <property type="entry name" value="CYP90-like"/>
    <property type="match status" value="1"/>
</dbReference>
<dbReference type="FunFam" id="1.10.630.10:FF:000014">
    <property type="entry name" value="Abscisic acid 8"/>
    <property type="match status" value="1"/>
</dbReference>
<dbReference type="Gene3D" id="1.10.630.10">
    <property type="entry name" value="Cytochrome P450"/>
    <property type="match status" value="1"/>
</dbReference>
<dbReference type="InterPro" id="IPR001128">
    <property type="entry name" value="Cyt_P450"/>
</dbReference>
<dbReference type="InterPro" id="IPR017972">
    <property type="entry name" value="Cyt_P450_CS"/>
</dbReference>
<dbReference type="InterPro" id="IPR002401">
    <property type="entry name" value="Cyt_P450_E_grp-I"/>
</dbReference>
<dbReference type="InterPro" id="IPR036396">
    <property type="entry name" value="Cyt_P450_sf"/>
</dbReference>
<dbReference type="PANTHER" id="PTHR24286:SF354">
    <property type="entry name" value="ABSCISIC ACID 8'-HYDROXYLASE 2"/>
    <property type="match status" value="1"/>
</dbReference>
<dbReference type="PANTHER" id="PTHR24286">
    <property type="entry name" value="CYTOCHROME P450 26"/>
    <property type="match status" value="1"/>
</dbReference>
<dbReference type="Pfam" id="PF00067">
    <property type="entry name" value="p450"/>
    <property type="match status" value="1"/>
</dbReference>
<dbReference type="PRINTS" id="PR00463">
    <property type="entry name" value="EP450I"/>
</dbReference>
<dbReference type="PRINTS" id="PR00385">
    <property type="entry name" value="P450"/>
</dbReference>
<dbReference type="SUPFAM" id="SSF48264">
    <property type="entry name" value="Cytochrome P450"/>
    <property type="match status" value="1"/>
</dbReference>
<dbReference type="PROSITE" id="PS00086">
    <property type="entry name" value="CYTOCHROME_P450"/>
    <property type="match status" value="1"/>
</dbReference>
<comment type="function">
    <text evidence="4">Involved in the oxidative degradation of abscisic acid.</text>
</comment>
<comment type="catalytic activity">
    <reaction evidence="2">
        <text>2-cis-(+)-abscisate + reduced [NADPH--hemoprotein reductase] + O2 = (+)-8'-hydroxyabscisate + oxidized [NADPH--hemoprotein reductase] + H2O + H(+)</text>
        <dbReference type="Rhea" id="RHEA:12897"/>
        <dbReference type="Rhea" id="RHEA-COMP:11964"/>
        <dbReference type="Rhea" id="RHEA-COMP:11965"/>
        <dbReference type="ChEBI" id="CHEBI:15377"/>
        <dbReference type="ChEBI" id="CHEBI:15378"/>
        <dbReference type="ChEBI" id="CHEBI:15379"/>
        <dbReference type="ChEBI" id="CHEBI:37569"/>
        <dbReference type="ChEBI" id="CHEBI:57618"/>
        <dbReference type="ChEBI" id="CHEBI:58210"/>
        <dbReference type="ChEBI" id="CHEBI:58490"/>
        <dbReference type="EC" id="1.14.14.137"/>
    </reaction>
</comment>
<comment type="cofactor">
    <cofactor evidence="1">
        <name>heme</name>
        <dbReference type="ChEBI" id="CHEBI:30413"/>
    </cofactor>
</comment>
<comment type="pathway">
    <text>Plant hormone degradation; abscisic acid degradation.</text>
</comment>
<comment type="subcellular location">
    <subcellularLocation>
        <location evidence="5">Membrane</location>
        <topology evidence="5">Single-pass membrane protein</topology>
    </subcellularLocation>
</comment>
<comment type="tissue specificity">
    <text evidence="4">In internodes and expanding leaves. Weak expression in seedlings.</text>
</comment>
<comment type="induction">
    <text>Not induced by ethylene or abscisic acid treatments, and salt or osmotic stresses.</text>
</comment>
<comment type="similarity">
    <text evidence="5">Belongs to the cytochrome P450 family.</text>
</comment>
<protein>
    <recommendedName>
        <fullName>Abscisic acid 8'-hydroxylase 2</fullName>
        <shortName>ABA 8'-hydroxylase 2</shortName>
        <ecNumber evidence="2">1.14.14.137</ecNumber>
    </recommendedName>
    <alternativeName>
        <fullName>Cytochrome P450 707A6</fullName>
    </alternativeName>
    <alternativeName>
        <fullName>OsABA8ox2</fullName>
    </alternativeName>
</protein>
<name>ABAH2_ORYSI</name>
<organism>
    <name type="scientific">Oryza sativa subsp. indica</name>
    <name type="common">Rice</name>
    <dbReference type="NCBI Taxonomy" id="39946"/>
    <lineage>
        <taxon>Eukaryota</taxon>
        <taxon>Viridiplantae</taxon>
        <taxon>Streptophyta</taxon>
        <taxon>Embryophyta</taxon>
        <taxon>Tracheophyta</taxon>
        <taxon>Spermatophyta</taxon>
        <taxon>Magnoliopsida</taxon>
        <taxon>Liliopsida</taxon>
        <taxon>Poales</taxon>
        <taxon>Poaceae</taxon>
        <taxon>BOP clade</taxon>
        <taxon>Oryzoideae</taxon>
        <taxon>Oryzeae</taxon>
        <taxon>Oryzinae</taxon>
        <taxon>Oryza</taxon>
        <taxon>Oryza sativa</taxon>
    </lineage>
</organism>
<reference key="1">
    <citation type="journal article" date="2006" name="Biochem. Biophys. Res. Commun.">
        <title>Characterization of genes encoding ABA 8'-hydroxylase in ethylene-induced stem growth of deepwater rice (Oryza sativa L.).</title>
        <authorList>
            <person name="Yang S.-H."/>
            <person name="Choi D."/>
        </authorList>
    </citation>
    <scope>NUCLEOTIDE SEQUENCE [MRNA]</scope>
    <scope>FUNCTION</scope>
    <scope>TISSUE SPECIFICITY</scope>
    <scope>LACK OF INDUCTION</scope>
    <source>
        <strain>cv. Pin Gaew 56</strain>
    </source>
</reference>
<reference key="2">
    <citation type="journal article" date="2005" name="PLoS Biol.">
        <title>The genomes of Oryza sativa: a history of duplications.</title>
        <authorList>
            <person name="Yu J."/>
            <person name="Wang J."/>
            <person name="Lin W."/>
            <person name="Li S."/>
            <person name="Li H."/>
            <person name="Zhou J."/>
            <person name="Ni P."/>
            <person name="Dong W."/>
            <person name="Hu S."/>
            <person name="Zeng C."/>
            <person name="Zhang J."/>
            <person name="Zhang Y."/>
            <person name="Li R."/>
            <person name="Xu Z."/>
            <person name="Li S."/>
            <person name="Li X."/>
            <person name="Zheng H."/>
            <person name="Cong L."/>
            <person name="Lin L."/>
            <person name="Yin J."/>
            <person name="Geng J."/>
            <person name="Li G."/>
            <person name="Shi J."/>
            <person name="Liu J."/>
            <person name="Lv H."/>
            <person name="Li J."/>
            <person name="Wang J."/>
            <person name="Deng Y."/>
            <person name="Ran L."/>
            <person name="Shi X."/>
            <person name="Wang X."/>
            <person name="Wu Q."/>
            <person name="Li C."/>
            <person name="Ren X."/>
            <person name="Wang J."/>
            <person name="Wang X."/>
            <person name="Li D."/>
            <person name="Liu D."/>
            <person name="Zhang X."/>
            <person name="Ji Z."/>
            <person name="Zhao W."/>
            <person name="Sun Y."/>
            <person name="Zhang Z."/>
            <person name="Bao J."/>
            <person name="Han Y."/>
            <person name="Dong L."/>
            <person name="Ji J."/>
            <person name="Chen P."/>
            <person name="Wu S."/>
            <person name="Liu J."/>
            <person name="Xiao Y."/>
            <person name="Bu D."/>
            <person name="Tan J."/>
            <person name="Yang L."/>
            <person name="Ye C."/>
            <person name="Zhang J."/>
            <person name="Xu J."/>
            <person name="Zhou Y."/>
            <person name="Yu Y."/>
            <person name="Zhang B."/>
            <person name="Zhuang S."/>
            <person name="Wei H."/>
            <person name="Liu B."/>
            <person name="Lei M."/>
            <person name="Yu H."/>
            <person name="Li Y."/>
            <person name="Xu H."/>
            <person name="Wei S."/>
            <person name="He X."/>
            <person name="Fang L."/>
            <person name="Zhang Z."/>
            <person name="Zhang Y."/>
            <person name="Huang X."/>
            <person name="Su Z."/>
            <person name="Tong W."/>
            <person name="Li J."/>
            <person name="Tong Z."/>
            <person name="Li S."/>
            <person name="Ye J."/>
            <person name="Wang L."/>
            <person name="Fang L."/>
            <person name="Lei T."/>
            <person name="Chen C.-S."/>
            <person name="Chen H.-C."/>
            <person name="Xu Z."/>
            <person name="Li H."/>
            <person name="Huang H."/>
            <person name="Zhang F."/>
            <person name="Xu H."/>
            <person name="Li N."/>
            <person name="Zhao C."/>
            <person name="Li S."/>
            <person name="Dong L."/>
            <person name="Huang Y."/>
            <person name="Li L."/>
            <person name="Xi Y."/>
            <person name="Qi Q."/>
            <person name="Li W."/>
            <person name="Zhang B."/>
            <person name="Hu W."/>
            <person name="Zhang Y."/>
            <person name="Tian X."/>
            <person name="Jiao Y."/>
            <person name="Liang X."/>
            <person name="Jin J."/>
            <person name="Gao L."/>
            <person name="Zheng W."/>
            <person name="Hao B."/>
            <person name="Liu S.-M."/>
            <person name="Wang W."/>
            <person name="Yuan L."/>
            <person name="Cao M."/>
            <person name="McDermott J."/>
            <person name="Samudrala R."/>
            <person name="Wang J."/>
            <person name="Wong G.K.-S."/>
            <person name="Yang H."/>
        </authorList>
    </citation>
    <scope>NUCLEOTIDE SEQUENCE [LARGE SCALE GENOMIC DNA]</scope>
    <source>
        <strain>cv. 93-11</strain>
    </source>
</reference>